<keyword id="KW-0031">Aminopeptidase</keyword>
<keyword id="KW-0963">Cytoplasm</keyword>
<keyword id="KW-0378">Hydrolase</keyword>
<keyword id="KW-0479">Metal-binding</keyword>
<keyword id="KW-0482">Metalloprotease</keyword>
<keyword id="KW-0645">Protease</keyword>
<keyword id="KW-1185">Reference proteome</keyword>
<keyword id="KW-0862">Zinc</keyword>
<proteinExistence type="inferred from homology"/>
<protein>
    <recommendedName>
        <fullName evidence="1">Peptidase T</fullName>
        <ecNumber evidence="1">3.4.11.4</ecNumber>
    </recommendedName>
    <alternativeName>
        <fullName evidence="1">Aminotripeptidase</fullName>
        <shortName evidence="1">Tripeptidase</shortName>
    </alternativeName>
    <alternativeName>
        <fullName evidence="1">Tripeptide aminopeptidase</fullName>
    </alternativeName>
</protein>
<reference key="1">
    <citation type="journal article" date="2003" name="Nature">
        <title>Genome sequence of Bacillus cereus and comparative analysis with Bacillus anthracis.</title>
        <authorList>
            <person name="Ivanova N."/>
            <person name="Sorokin A."/>
            <person name="Anderson I."/>
            <person name="Galleron N."/>
            <person name="Candelon B."/>
            <person name="Kapatral V."/>
            <person name="Bhattacharyya A."/>
            <person name="Reznik G."/>
            <person name="Mikhailova N."/>
            <person name="Lapidus A."/>
            <person name="Chu L."/>
            <person name="Mazur M."/>
            <person name="Goltsman E."/>
            <person name="Larsen N."/>
            <person name="D'Souza M."/>
            <person name="Walunas T."/>
            <person name="Grechkin Y."/>
            <person name="Pusch G."/>
            <person name="Haselkorn R."/>
            <person name="Fonstein M."/>
            <person name="Ehrlich S.D."/>
            <person name="Overbeek R."/>
            <person name="Kyrpides N.C."/>
        </authorList>
    </citation>
    <scope>NUCLEOTIDE SEQUENCE [LARGE SCALE GENOMIC DNA]</scope>
    <source>
        <strain>ATCC 14579 / DSM 31 / CCUG 7414 / JCM 2152 / NBRC 15305 / NCIMB 9373 / NCTC 2599 / NRRL B-3711</strain>
    </source>
</reference>
<dbReference type="EC" id="3.4.11.4" evidence="1"/>
<dbReference type="EMBL" id="AE016877">
    <property type="protein sequence ID" value="AAP10669.1"/>
    <property type="molecule type" value="Genomic_DNA"/>
</dbReference>
<dbReference type="RefSeq" id="NP_833468.1">
    <property type="nucleotide sequence ID" value="NC_004722.1"/>
</dbReference>
<dbReference type="SMR" id="Q81A48"/>
<dbReference type="STRING" id="226900.BC_3743"/>
<dbReference type="MEROPS" id="M20.003"/>
<dbReference type="KEGG" id="bce:BC3743"/>
<dbReference type="PATRIC" id="fig|226900.8.peg.3857"/>
<dbReference type="HOGENOM" id="CLU_053676_0_0_9"/>
<dbReference type="Proteomes" id="UP000001417">
    <property type="component" value="Chromosome"/>
</dbReference>
<dbReference type="GO" id="GO:0005829">
    <property type="term" value="C:cytosol"/>
    <property type="evidence" value="ECO:0000318"/>
    <property type="project" value="GO_Central"/>
</dbReference>
<dbReference type="GO" id="GO:0008237">
    <property type="term" value="F:metallopeptidase activity"/>
    <property type="evidence" value="ECO:0007669"/>
    <property type="project" value="UniProtKB-KW"/>
</dbReference>
<dbReference type="GO" id="GO:0045148">
    <property type="term" value="F:tripeptide aminopeptidase activity"/>
    <property type="evidence" value="ECO:0000318"/>
    <property type="project" value="GO_Central"/>
</dbReference>
<dbReference type="GO" id="GO:0008270">
    <property type="term" value="F:zinc ion binding"/>
    <property type="evidence" value="ECO:0007669"/>
    <property type="project" value="UniProtKB-UniRule"/>
</dbReference>
<dbReference type="GO" id="GO:0043171">
    <property type="term" value="P:peptide catabolic process"/>
    <property type="evidence" value="ECO:0007669"/>
    <property type="project" value="UniProtKB-UniRule"/>
</dbReference>
<dbReference type="GO" id="GO:0006508">
    <property type="term" value="P:proteolysis"/>
    <property type="evidence" value="ECO:0007669"/>
    <property type="project" value="UniProtKB-UniRule"/>
</dbReference>
<dbReference type="CDD" id="cd03892">
    <property type="entry name" value="M20_peptT"/>
    <property type="match status" value="1"/>
</dbReference>
<dbReference type="FunFam" id="3.30.70.360:FF:000002">
    <property type="entry name" value="Peptidase T"/>
    <property type="match status" value="1"/>
</dbReference>
<dbReference type="Gene3D" id="3.30.70.360">
    <property type="match status" value="1"/>
</dbReference>
<dbReference type="Gene3D" id="3.40.630.10">
    <property type="entry name" value="Zn peptidases"/>
    <property type="match status" value="1"/>
</dbReference>
<dbReference type="HAMAP" id="MF_00550">
    <property type="entry name" value="Aminopeptidase_M20"/>
    <property type="match status" value="1"/>
</dbReference>
<dbReference type="InterPro" id="IPR001261">
    <property type="entry name" value="ArgE/DapE_CS"/>
</dbReference>
<dbReference type="InterPro" id="IPR036264">
    <property type="entry name" value="Bact_exopeptidase_dim_dom"/>
</dbReference>
<dbReference type="InterPro" id="IPR002933">
    <property type="entry name" value="Peptidase_M20"/>
</dbReference>
<dbReference type="InterPro" id="IPR011650">
    <property type="entry name" value="Peptidase_M20_dimer"/>
</dbReference>
<dbReference type="InterPro" id="IPR010161">
    <property type="entry name" value="Peptidase_M20B"/>
</dbReference>
<dbReference type="NCBIfam" id="TIGR01882">
    <property type="entry name" value="peptidase-T"/>
    <property type="match status" value="1"/>
</dbReference>
<dbReference type="NCBIfam" id="NF003976">
    <property type="entry name" value="PRK05469.1"/>
    <property type="match status" value="1"/>
</dbReference>
<dbReference type="NCBIfam" id="NF009920">
    <property type="entry name" value="PRK13381.1"/>
    <property type="match status" value="1"/>
</dbReference>
<dbReference type="PANTHER" id="PTHR42994">
    <property type="entry name" value="PEPTIDASE T"/>
    <property type="match status" value="1"/>
</dbReference>
<dbReference type="PANTHER" id="PTHR42994:SF1">
    <property type="entry name" value="PEPTIDASE T"/>
    <property type="match status" value="1"/>
</dbReference>
<dbReference type="Pfam" id="PF07687">
    <property type="entry name" value="M20_dimer"/>
    <property type="match status" value="1"/>
</dbReference>
<dbReference type="Pfam" id="PF01546">
    <property type="entry name" value="Peptidase_M20"/>
    <property type="match status" value="1"/>
</dbReference>
<dbReference type="PIRSF" id="PIRSF037215">
    <property type="entry name" value="Peptidase_M20B"/>
    <property type="match status" value="1"/>
</dbReference>
<dbReference type="SUPFAM" id="SSF55031">
    <property type="entry name" value="Bacterial exopeptidase dimerisation domain"/>
    <property type="match status" value="1"/>
</dbReference>
<dbReference type="SUPFAM" id="SSF53187">
    <property type="entry name" value="Zn-dependent exopeptidases"/>
    <property type="match status" value="1"/>
</dbReference>
<dbReference type="PROSITE" id="PS00758">
    <property type="entry name" value="ARGE_DAPE_CPG2_1"/>
    <property type="match status" value="1"/>
</dbReference>
<dbReference type="PROSITE" id="PS00759">
    <property type="entry name" value="ARGE_DAPE_CPG2_2"/>
    <property type="match status" value="1"/>
</dbReference>
<feature type="chain" id="PRO_0000185279" description="Peptidase T">
    <location>
        <begin position="1"/>
        <end position="412"/>
    </location>
</feature>
<feature type="active site" evidence="1">
    <location>
        <position position="83"/>
    </location>
</feature>
<feature type="active site" description="Proton acceptor" evidence="1">
    <location>
        <position position="178"/>
    </location>
</feature>
<feature type="binding site" evidence="1">
    <location>
        <position position="81"/>
    </location>
    <ligand>
        <name>Zn(2+)</name>
        <dbReference type="ChEBI" id="CHEBI:29105"/>
        <label>1</label>
    </ligand>
</feature>
<feature type="binding site" evidence="1">
    <location>
        <position position="144"/>
    </location>
    <ligand>
        <name>Zn(2+)</name>
        <dbReference type="ChEBI" id="CHEBI:29105"/>
        <label>1</label>
    </ligand>
</feature>
<feature type="binding site" evidence="1">
    <location>
        <position position="144"/>
    </location>
    <ligand>
        <name>Zn(2+)</name>
        <dbReference type="ChEBI" id="CHEBI:29105"/>
        <label>2</label>
    </ligand>
</feature>
<feature type="binding site" evidence="1">
    <location>
        <position position="179"/>
    </location>
    <ligand>
        <name>Zn(2+)</name>
        <dbReference type="ChEBI" id="CHEBI:29105"/>
        <label>2</label>
    </ligand>
</feature>
<feature type="binding site" evidence="1">
    <location>
        <position position="201"/>
    </location>
    <ligand>
        <name>Zn(2+)</name>
        <dbReference type="ChEBI" id="CHEBI:29105"/>
        <label>1</label>
    </ligand>
</feature>
<feature type="binding site" evidence="1">
    <location>
        <position position="383"/>
    </location>
    <ligand>
        <name>Zn(2+)</name>
        <dbReference type="ChEBI" id="CHEBI:29105"/>
        <label>2</label>
    </ligand>
</feature>
<gene>
    <name evidence="1" type="primary">pepT</name>
    <name type="ordered locus">BC_3743</name>
</gene>
<organism>
    <name type="scientific">Bacillus cereus (strain ATCC 14579 / DSM 31 / CCUG 7414 / JCM 2152 / NBRC 15305 / NCIMB 9373 / NCTC 2599 / NRRL B-3711)</name>
    <dbReference type="NCBI Taxonomy" id="226900"/>
    <lineage>
        <taxon>Bacteria</taxon>
        <taxon>Bacillati</taxon>
        <taxon>Bacillota</taxon>
        <taxon>Bacilli</taxon>
        <taxon>Bacillales</taxon>
        <taxon>Bacillaceae</taxon>
        <taxon>Bacillus</taxon>
        <taxon>Bacillus cereus group</taxon>
    </lineage>
</organism>
<evidence type="ECO:0000255" key="1">
    <source>
        <dbReference type="HAMAP-Rule" id="MF_00550"/>
    </source>
</evidence>
<sequence>MNLKQELIERFTRYVKIDTQSNEESHTVPTTPGQIEFGKLLVEELKEIGLTEVTMDDNGYVMATLPANTDKDVPVIGFLAHLDTATDFTGKNVKPQIHENFDGNAITLNEELNVVLTPEQFPELPSYKGHTIITTDGTTLLGADDKAGLTEIMVAMNHLIHNPQIKHGKIRVAFTPDEEIGRGPAHFDVEAFGASFAYTMDGGPLGGLEYESFNAAGAKLTFNGTNTHPGTAKNKMRNATKLAMEFNGYLPVEDAPEYTEGYEGFYHLLSLNGDVEQSKAYYIIRDFDRENFEARKNNVKNIVKTMQEKYGEDAVVLEMNDQYYNMLEKIEPVREIVDIAYEAMKSLDIEPNIHPIRGGTDGSQLSYMGLPTPNIFTGGENYHGKFEYVSVDTMEKAVQVIVEIARRFEEQA</sequence>
<name>PEPT_BACCR</name>
<accession>Q81A48</accession>
<comment type="function">
    <text evidence="1">Cleaves the N-terminal amino acid of tripeptides.</text>
</comment>
<comment type="catalytic activity">
    <reaction evidence="1">
        <text>Release of the N-terminal residue from a tripeptide.</text>
        <dbReference type="EC" id="3.4.11.4"/>
    </reaction>
</comment>
<comment type="cofactor">
    <cofactor evidence="1">
        <name>Zn(2+)</name>
        <dbReference type="ChEBI" id="CHEBI:29105"/>
    </cofactor>
    <text evidence="1">Binds 2 Zn(2+) ions per subunit.</text>
</comment>
<comment type="subcellular location">
    <subcellularLocation>
        <location evidence="1">Cytoplasm</location>
    </subcellularLocation>
</comment>
<comment type="similarity">
    <text evidence="1">Belongs to the peptidase M20B family.</text>
</comment>